<dbReference type="EC" id="2.7.1.167" evidence="1"/>
<dbReference type="EC" id="2.7.7.70" evidence="1"/>
<dbReference type="EMBL" id="BX571658">
    <property type="protein sequence ID" value="CAE09808.1"/>
    <property type="molecule type" value="Genomic_DNA"/>
</dbReference>
<dbReference type="RefSeq" id="WP_011138608.1">
    <property type="nucleotide sequence ID" value="NC_005090.1"/>
</dbReference>
<dbReference type="SMR" id="Q7M9U1"/>
<dbReference type="STRING" id="273121.WS0680"/>
<dbReference type="DNASU" id="2554954"/>
<dbReference type="KEGG" id="wsu:WS0680"/>
<dbReference type="eggNOG" id="COG0615">
    <property type="taxonomic scope" value="Bacteria"/>
</dbReference>
<dbReference type="eggNOG" id="COG2870">
    <property type="taxonomic scope" value="Bacteria"/>
</dbReference>
<dbReference type="HOGENOM" id="CLU_021150_2_1_7"/>
<dbReference type="UniPathway" id="UPA00356">
    <property type="reaction ID" value="UER00437"/>
</dbReference>
<dbReference type="UniPathway" id="UPA00356">
    <property type="reaction ID" value="UER00439"/>
</dbReference>
<dbReference type="Proteomes" id="UP000000422">
    <property type="component" value="Chromosome"/>
</dbReference>
<dbReference type="GO" id="GO:0005829">
    <property type="term" value="C:cytosol"/>
    <property type="evidence" value="ECO:0007669"/>
    <property type="project" value="TreeGrafter"/>
</dbReference>
<dbReference type="GO" id="GO:0005524">
    <property type="term" value="F:ATP binding"/>
    <property type="evidence" value="ECO:0007669"/>
    <property type="project" value="UniProtKB-UniRule"/>
</dbReference>
<dbReference type="GO" id="GO:0033785">
    <property type="term" value="F:heptose 7-phosphate kinase activity"/>
    <property type="evidence" value="ECO:0007669"/>
    <property type="project" value="UniProtKB-UniRule"/>
</dbReference>
<dbReference type="GO" id="GO:0033786">
    <property type="term" value="F:heptose-1-phosphate adenylyltransferase activity"/>
    <property type="evidence" value="ECO:0007669"/>
    <property type="project" value="UniProtKB-UniRule"/>
</dbReference>
<dbReference type="GO" id="GO:0016773">
    <property type="term" value="F:phosphotransferase activity, alcohol group as acceptor"/>
    <property type="evidence" value="ECO:0007669"/>
    <property type="project" value="InterPro"/>
</dbReference>
<dbReference type="GO" id="GO:0097171">
    <property type="term" value="P:ADP-L-glycero-beta-D-manno-heptose biosynthetic process"/>
    <property type="evidence" value="ECO:0007669"/>
    <property type="project" value="UniProtKB-UniPathway"/>
</dbReference>
<dbReference type="CDD" id="cd01172">
    <property type="entry name" value="RfaE_like"/>
    <property type="match status" value="1"/>
</dbReference>
<dbReference type="FunFam" id="3.40.1190.20:FF:000002">
    <property type="entry name" value="Bifunctional protein HldE"/>
    <property type="match status" value="1"/>
</dbReference>
<dbReference type="Gene3D" id="3.40.1190.20">
    <property type="match status" value="1"/>
</dbReference>
<dbReference type="Gene3D" id="3.40.50.620">
    <property type="entry name" value="HUPs"/>
    <property type="match status" value="1"/>
</dbReference>
<dbReference type="HAMAP" id="MF_01603">
    <property type="entry name" value="HldE"/>
    <property type="match status" value="1"/>
</dbReference>
<dbReference type="InterPro" id="IPR023030">
    <property type="entry name" value="Bifunc_HldE"/>
</dbReference>
<dbReference type="InterPro" id="IPR004821">
    <property type="entry name" value="Cyt_trans-like"/>
</dbReference>
<dbReference type="InterPro" id="IPR011611">
    <property type="entry name" value="PfkB_dom"/>
</dbReference>
<dbReference type="InterPro" id="IPR011913">
    <property type="entry name" value="RfaE_dom_I"/>
</dbReference>
<dbReference type="InterPro" id="IPR011914">
    <property type="entry name" value="RfaE_dom_II"/>
</dbReference>
<dbReference type="InterPro" id="IPR029056">
    <property type="entry name" value="Ribokinase-like"/>
</dbReference>
<dbReference type="InterPro" id="IPR014729">
    <property type="entry name" value="Rossmann-like_a/b/a_fold"/>
</dbReference>
<dbReference type="NCBIfam" id="TIGR00125">
    <property type="entry name" value="cyt_tran_rel"/>
    <property type="match status" value="1"/>
</dbReference>
<dbReference type="NCBIfam" id="TIGR02198">
    <property type="entry name" value="rfaE_dom_I"/>
    <property type="match status" value="1"/>
</dbReference>
<dbReference type="NCBIfam" id="TIGR02199">
    <property type="entry name" value="rfaE_dom_II"/>
    <property type="match status" value="1"/>
</dbReference>
<dbReference type="PANTHER" id="PTHR46969">
    <property type="entry name" value="BIFUNCTIONAL PROTEIN HLDE"/>
    <property type="match status" value="1"/>
</dbReference>
<dbReference type="PANTHER" id="PTHR46969:SF1">
    <property type="entry name" value="BIFUNCTIONAL PROTEIN HLDE"/>
    <property type="match status" value="1"/>
</dbReference>
<dbReference type="Pfam" id="PF01467">
    <property type="entry name" value="CTP_transf_like"/>
    <property type="match status" value="1"/>
</dbReference>
<dbReference type="Pfam" id="PF00294">
    <property type="entry name" value="PfkB"/>
    <property type="match status" value="1"/>
</dbReference>
<dbReference type="SUPFAM" id="SSF52374">
    <property type="entry name" value="Nucleotidylyl transferase"/>
    <property type="match status" value="1"/>
</dbReference>
<dbReference type="SUPFAM" id="SSF53613">
    <property type="entry name" value="Ribokinase-like"/>
    <property type="match status" value="1"/>
</dbReference>
<accession>Q7M9U1</accession>
<sequence>MILSSSLRPTILVVGDLMIDHYIWGECERISPEAPVQVIDVKRETKTLGGACNVMSNLIALEASVLSCGVVGEDLAGRELLGFLQELGMESKGIITQKGRPTTQKSRIIASNQQVVRVDWENKSPISEESEEAMIAYIRSKLSLCDAVILSDYGKGVLTPRVCQTIIQMAKTLQKRVLVDPKGRDYSKYRGASLLTPNKKEAKEATGIEINDEASLKKALECLKKECELEFSVITLSEDGIGIFDQALERIPTIAQEVYDVTGAGDTVIASLAYGLSLGYPLRECALFANAAAAVVVGKIGSATATHGEIAEYLHSSHQGESQERILSRDSIQKIAKQWRSRGRKIVFTNGCFDILHAGHVQYLQKAKACGDCLIVGLNSDASVRRLKGELRPINSQEDRALVLSGLEAVDYVVVFDEETPYELIRAIEPDVLVKGGDYEGKEVVGSDLVKEVKLIEFLEGRSTSAVVKKIQGS</sequence>
<gene>
    <name evidence="1" type="primary">hldE</name>
    <name type="synonym">waaE</name>
    <name type="ordered locus">WS0680</name>
</gene>
<reference key="1">
    <citation type="journal article" date="2003" name="Proc. Natl. Acad. Sci. U.S.A.">
        <title>Complete genome sequence and analysis of Wolinella succinogenes.</title>
        <authorList>
            <person name="Baar C."/>
            <person name="Eppinger M."/>
            <person name="Raddatz G."/>
            <person name="Simon J."/>
            <person name="Lanz C."/>
            <person name="Klimmek O."/>
            <person name="Nandakumar R."/>
            <person name="Gross R."/>
            <person name="Rosinus A."/>
            <person name="Keller H."/>
            <person name="Jagtap P."/>
            <person name="Linke B."/>
            <person name="Meyer F."/>
            <person name="Lederer H."/>
            <person name="Schuster S.C."/>
        </authorList>
    </citation>
    <scope>NUCLEOTIDE SEQUENCE [LARGE SCALE GENOMIC DNA]</scope>
    <source>
        <strain>ATCC 29543 / DSM 1740 / CCUG 13145 / JCM 31913 / LMG 7466 / NCTC 11488 / FDC 602W</strain>
    </source>
</reference>
<organism>
    <name type="scientific">Wolinella succinogenes (strain ATCC 29543 / DSM 1740 / CCUG 13145 / JCM 31913 / LMG 7466 / NCTC 11488 / FDC 602W)</name>
    <name type="common">Vibrio succinogenes</name>
    <dbReference type="NCBI Taxonomy" id="273121"/>
    <lineage>
        <taxon>Bacteria</taxon>
        <taxon>Pseudomonadati</taxon>
        <taxon>Campylobacterota</taxon>
        <taxon>Epsilonproteobacteria</taxon>
        <taxon>Campylobacterales</taxon>
        <taxon>Helicobacteraceae</taxon>
        <taxon>Wolinella</taxon>
    </lineage>
</organism>
<comment type="function">
    <text evidence="1">Catalyzes the phosphorylation of D-glycero-D-manno-heptose 7-phosphate at the C-1 position to selectively form D-glycero-beta-D-manno-heptose-1,7-bisphosphate.</text>
</comment>
<comment type="function">
    <text evidence="1">Catalyzes the ADP transfer from ATP to D-glycero-beta-D-manno-heptose 1-phosphate, yielding ADP-D-glycero-beta-D-manno-heptose.</text>
</comment>
<comment type="catalytic activity">
    <reaction evidence="1">
        <text>D-glycero-beta-D-manno-heptose 7-phosphate + ATP = D-glycero-beta-D-manno-heptose 1,7-bisphosphate + ADP + H(+)</text>
        <dbReference type="Rhea" id="RHEA:27473"/>
        <dbReference type="ChEBI" id="CHEBI:15378"/>
        <dbReference type="ChEBI" id="CHEBI:30616"/>
        <dbReference type="ChEBI" id="CHEBI:60204"/>
        <dbReference type="ChEBI" id="CHEBI:60208"/>
        <dbReference type="ChEBI" id="CHEBI:456216"/>
        <dbReference type="EC" id="2.7.1.167"/>
    </reaction>
</comment>
<comment type="catalytic activity">
    <reaction evidence="1">
        <text>D-glycero-beta-D-manno-heptose 1-phosphate + ATP + H(+) = ADP-D-glycero-beta-D-manno-heptose + diphosphate</text>
        <dbReference type="Rhea" id="RHEA:27465"/>
        <dbReference type="ChEBI" id="CHEBI:15378"/>
        <dbReference type="ChEBI" id="CHEBI:30616"/>
        <dbReference type="ChEBI" id="CHEBI:33019"/>
        <dbReference type="ChEBI" id="CHEBI:59967"/>
        <dbReference type="ChEBI" id="CHEBI:61593"/>
        <dbReference type="EC" id="2.7.7.70"/>
    </reaction>
</comment>
<comment type="pathway">
    <text evidence="1">Nucleotide-sugar biosynthesis; ADP-L-glycero-beta-D-manno-heptose biosynthesis; ADP-L-glycero-beta-D-manno-heptose from D-glycero-beta-D-manno-heptose 7-phosphate: step 1/4.</text>
</comment>
<comment type="pathway">
    <text evidence="1">Nucleotide-sugar biosynthesis; ADP-L-glycero-beta-D-manno-heptose biosynthesis; ADP-L-glycero-beta-D-manno-heptose from D-glycero-beta-D-manno-heptose 7-phosphate: step 3/4.</text>
</comment>
<comment type="subunit">
    <text evidence="1">Homodimer.</text>
</comment>
<comment type="similarity">
    <text evidence="1">In the N-terminal section; belongs to the carbohydrate kinase PfkB family.</text>
</comment>
<comment type="similarity">
    <text evidence="1">In the C-terminal section; belongs to the cytidylyltransferase family.</text>
</comment>
<keyword id="KW-0067">ATP-binding</keyword>
<keyword id="KW-0119">Carbohydrate metabolism</keyword>
<keyword id="KW-0418">Kinase</keyword>
<keyword id="KW-0511">Multifunctional enzyme</keyword>
<keyword id="KW-0547">Nucleotide-binding</keyword>
<keyword id="KW-0548">Nucleotidyltransferase</keyword>
<keyword id="KW-1185">Reference proteome</keyword>
<keyword id="KW-0808">Transferase</keyword>
<feature type="chain" id="PRO_0000080132" description="Bifunctional protein HldE">
    <location>
        <begin position="1"/>
        <end position="474"/>
    </location>
</feature>
<feature type="region of interest" description="Ribokinase">
    <location>
        <begin position="1"/>
        <end position="321"/>
    </location>
</feature>
<feature type="region of interest" description="Cytidylyltransferase">
    <location>
        <begin position="348"/>
        <end position="474"/>
    </location>
</feature>
<feature type="active site" evidence="1">
    <location>
        <position position="266"/>
    </location>
</feature>
<feature type="binding site" evidence="1">
    <location>
        <begin position="198"/>
        <end position="201"/>
    </location>
    <ligand>
        <name>ATP</name>
        <dbReference type="ChEBI" id="CHEBI:30616"/>
    </ligand>
</feature>
<evidence type="ECO:0000255" key="1">
    <source>
        <dbReference type="HAMAP-Rule" id="MF_01603"/>
    </source>
</evidence>
<protein>
    <recommendedName>
        <fullName evidence="1">Bifunctional protein HldE</fullName>
    </recommendedName>
    <domain>
        <recommendedName>
            <fullName evidence="1">D-beta-D-heptose 7-phosphate kinase</fullName>
            <ecNumber evidence="1">2.7.1.167</ecNumber>
        </recommendedName>
        <alternativeName>
            <fullName evidence="1">D-beta-D-heptose 7-phosphotransferase</fullName>
        </alternativeName>
        <alternativeName>
            <fullName evidence="1">D-glycero-beta-D-manno-heptose-7-phosphate kinase</fullName>
        </alternativeName>
    </domain>
    <domain>
        <recommendedName>
            <fullName evidence="1">D-beta-D-heptose 1-phosphate adenylyltransferase</fullName>
            <ecNumber evidence="1">2.7.7.70</ecNumber>
        </recommendedName>
        <alternativeName>
            <fullName evidence="1">D-glycero-beta-D-manno-heptose 1-phosphate adenylyltransferase</fullName>
        </alternativeName>
    </domain>
</protein>
<proteinExistence type="inferred from homology"/>
<name>HLDE_WOLSU</name>